<keyword id="KW-0963">Cytoplasm</keyword>
<keyword id="KW-0448">Lipopolysaccharide biosynthesis</keyword>
<keyword id="KW-0808">Transferase</keyword>
<evidence type="ECO:0000255" key="1">
    <source>
        <dbReference type="HAMAP-Rule" id="MF_00056"/>
    </source>
</evidence>
<sequence length="284" mass="30918">MKLCDFEVGLDQPFFLIAGTCVVESEQMTIDTAGRLKEICEKLNVPFIYKSSYDKANRSSGKSFRGLGMDEGLRILGEVKRQLGLPVLTDVHSIDEIEQVASVVDVLQTPAFLCRQTDFIHACARSGKPVNIKKGQFLAPHDMKNVIDKARDAAREAGLSEDRFMACERGVSFGYNNLVSDMRSLAIMRETNAPVVFDATHSVQLPGGQGTSSGGQREFVPVLARAAVATGVAGLFMETHPNPAEAKSDGPNAVPLNRMGALLETLVTLDQAVKRNPFLENDFN</sequence>
<name>KDSA_BURO0</name>
<proteinExistence type="inferred from homology"/>
<dbReference type="EC" id="2.5.1.55" evidence="1"/>
<dbReference type="EMBL" id="CP000958">
    <property type="protein sequence ID" value="ACA91287.1"/>
    <property type="molecule type" value="Genomic_DNA"/>
</dbReference>
<dbReference type="RefSeq" id="WP_006478405.1">
    <property type="nucleotide sequence ID" value="NC_010508.1"/>
</dbReference>
<dbReference type="SMR" id="B1JUY7"/>
<dbReference type="GeneID" id="83048910"/>
<dbReference type="KEGG" id="bcm:Bcenmc03_2126"/>
<dbReference type="HOGENOM" id="CLU_036666_0_0_4"/>
<dbReference type="UniPathway" id="UPA00030"/>
<dbReference type="UniPathway" id="UPA00357">
    <property type="reaction ID" value="UER00474"/>
</dbReference>
<dbReference type="Proteomes" id="UP000002169">
    <property type="component" value="Chromosome 1"/>
</dbReference>
<dbReference type="GO" id="GO:0005737">
    <property type="term" value="C:cytoplasm"/>
    <property type="evidence" value="ECO:0007669"/>
    <property type="project" value="UniProtKB-SubCell"/>
</dbReference>
<dbReference type="GO" id="GO:0008676">
    <property type="term" value="F:3-deoxy-8-phosphooctulonate synthase activity"/>
    <property type="evidence" value="ECO:0007669"/>
    <property type="project" value="UniProtKB-UniRule"/>
</dbReference>
<dbReference type="GO" id="GO:0019294">
    <property type="term" value="P:keto-3-deoxy-D-manno-octulosonic acid biosynthetic process"/>
    <property type="evidence" value="ECO:0007669"/>
    <property type="project" value="UniProtKB-UniRule"/>
</dbReference>
<dbReference type="Gene3D" id="3.20.20.70">
    <property type="entry name" value="Aldolase class I"/>
    <property type="match status" value="1"/>
</dbReference>
<dbReference type="HAMAP" id="MF_00056">
    <property type="entry name" value="KDO8P_synth"/>
    <property type="match status" value="1"/>
</dbReference>
<dbReference type="InterPro" id="IPR013785">
    <property type="entry name" value="Aldolase_TIM"/>
</dbReference>
<dbReference type="InterPro" id="IPR006218">
    <property type="entry name" value="DAHP1/KDSA"/>
</dbReference>
<dbReference type="InterPro" id="IPR006269">
    <property type="entry name" value="KDO8P_synthase"/>
</dbReference>
<dbReference type="NCBIfam" id="TIGR01362">
    <property type="entry name" value="KDO8P_synth"/>
    <property type="match status" value="1"/>
</dbReference>
<dbReference type="NCBIfam" id="NF003543">
    <property type="entry name" value="PRK05198.1"/>
    <property type="match status" value="1"/>
</dbReference>
<dbReference type="PANTHER" id="PTHR21057">
    <property type="entry name" value="PHOSPHO-2-DEHYDRO-3-DEOXYHEPTONATE ALDOLASE"/>
    <property type="match status" value="1"/>
</dbReference>
<dbReference type="Pfam" id="PF00793">
    <property type="entry name" value="DAHP_synth_1"/>
    <property type="match status" value="1"/>
</dbReference>
<dbReference type="SUPFAM" id="SSF51569">
    <property type="entry name" value="Aldolase"/>
    <property type="match status" value="1"/>
</dbReference>
<feature type="chain" id="PRO_1000091800" description="2-dehydro-3-deoxyphosphooctonate aldolase">
    <location>
        <begin position="1"/>
        <end position="284"/>
    </location>
</feature>
<reference key="1">
    <citation type="submission" date="2008-02" db="EMBL/GenBank/DDBJ databases">
        <title>Complete sequence of chromosome 1 of Burkholderia cenocepacia MC0-3.</title>
        <authorList>
            <person name="Copeland A."/>
            <person name="Lucas S."/>
            <person name="Lapidus A."/>
            <person name="Barry K."/>
            <person name="Bruce D."/>
            <person name="Goodwin L."/>
            <person name="Glavina del Rio T."/>
            <person name="Dalin E."/>
            <person name="Tice H."/>
            <person name="Pitluck S."/>
            <person name="Chain P."/>
            <person name="Malfatti S."/>
            <person name="Shin M."/>
            <person name="Vergez L."/>
            <person name="Schmutz J."/>
            <person name="Larimer F."/>
            <person name="Land M."/>
            <person name="Hauser L."/>
            <person name="Kyrpides N."/>
            <person name="Mikhailova N."/>
            <person name="Tiedje J."/>
            <person name="Richardson P."/>
        </authorList>
    </citation>
    <scope>NUCLEOTIDE SEQUENCE [LARGE SCALE GENOMIC DNA]</scope>
    <source>
        <strain>MC0-3</strain>
    </source>
</reference>
<accession>B1JUY7</accession>
<gene>
    <name evidence="1" type="primary">kdsA</name>
    <name type="ordered locus">Bcenmc03_2126</name>
</gene>
<protein>
    <recommendedName>
        <fullName evidence="1">2-dehydro-3-deoxyphosphooctonate aldolase</fullName>
        <ecNumber evidence="1">2.5.1.55</ecNumber>
    </recommendedName>
    <alternativeName>
        <fullName evidence="1">3-deoxy-D-manno-octulosonic acid 8-phosphate synthase</fullName>
    </alternativeName>
    <alternativeName>
        <fullName evidence="1">KDO-8-phosphate synthase</fullName>
        <shortName evidence="1">KDO 8-P synthase</shortName>
        <shortName evidence="1">KDOPS</shortName>
    </alternativeName>
    <alternativeName>
        <fullName evidence="1">Phospho-2-dehydro-3-deoxyoctonate aldolase</fullName>
    </alternativeName>
</protein>
<organism>
    <name type="scientific">Burkholderia orbicola (strain MC0-3)</name>
    <dbReference type="NCBI Taxonomy" id="406425"/>
    <lineage>
        <taxon>Bacteria</taxon>
        <taxon>Pseudomonadati</taxon>
        <taxon>Pseudomonadota</taxon>
        <taxon>Betaproteobacteria</taxon>
        <taxon>Burkholderiales</taxon>
        <taxon>Burkholderiaceae</taxon>
        <taxon>Burkholderia</taxon>
        <taxon>Burkholderia cepacia complex</taxon>
        <taxon>Burkholderia orbicola</taxon>
    </lineage>
</organism>
<comment type="catalytic activity">
    <reaction evidence="1">
        <text>D-arabinose 5-phosphate + phosphoenolpyruvate + H2O = 3-deoxy-alpha-D-manno-2-octulosonate-8-phosphate + phosphate</text>
        <dbReference type="Rhea" id="RHEA:14053"/>
        <dbReference type="ChEBI" id="CHEBI:15377"/>
        <dbReference type="ChEBI" id="CHEBI:43474"/>
        <dbReference type="ChEBI" id="CHEBI:57693"/>
        <dbReference type="ChEBI" id="CHEBI:58702"/>
        <dbReference type="ChEBI" id="CHEBI:85985"/>
        <dbReference type="EC" id="2.5.1.55"/>
    </reaction>
</comment>
<comment type="pathway">
    <text evidence="1">Carbohydrate biosynthesis; 3-deoxy-D-manno-octulosonate biosynthesis; 3-deoxy-D-manno-octulosonate from D-ribulose 5-phosphate: step 2/3.</text>
</comment>
<comment type="pathway">
    <text evidence="1">Bacterial outer membrane biogenesis; lipopolysaccharide biosynthesis.</text>
</comment>
<comment type="subcellular location">
    <subcellularLocation>
        <location evidence="1">Cytoplasm</location>
    </subcellularLocation>
</comment>
<comment type="similarity">
    <text evidence="1">Belongs to the KdsA family.</text>
</comment>